<protein>
    <recommendedName>
        <fullName evidence="1">Protease HtpX</fullName>
        <ecNumber evidence="1">3.4.24.-</ecNumber>
    </recommendedName>
    <alternativeName>
        <fullName evidence="1">Heat shock protein HtpX</fullName>
    </alternativeName>
</protein>
<name>HTPX_BUCAP</name>
<organism>
    <name type="scientific">Buchnera aphidicola subsp. Schizaphis graminum (strain Sg)</name>
    <dbReference type="NCBI Taxonomy" id="198804"/>
    <lineage>
        <taxon>Bacteria</taxon>
        <taxon>Pseudomonadati</taxon>
        <taxon>Pseudomonadota</taxon>
        <taxon>Gammaproteobacteria</taxon>
        <taxon>Enterobacterales</taxon>
        <taxon>Erwiniaceae</taxon>
        <taxon>Buchnera</taxon>
    </lineage>
</organism>
<reference key="1">
    <citation type="journal article" date="2002" name="Science">
        <title>50 million years of genomic stasis in endosymbiotic bacteria.</title>
        <authorList>
            <person name="Tamas I."/>
            <person name="Klasson L."/>
            <person name="Canbaeck B."/>
            <person name="Naeslund A.K."/>
            <person name="Eriksson A.-S."/>
            <person name="Wernegreen J.J."/>
            <person name="Sandstroem J.P."/>
            <person name="Moran N.A."/>
            <person name="Andersson S.G.E."/>
        </authorList>
    </citation>
    <scope>NUCLEOTIDE SEQUENCE [LARGE SCALE GENOMIC DNA]</scope>
    <source>
        <strain>Sg</strain>
    </source>
</reference>
<gene>
    <name evidence="1" type="primary">htpX</name>
    <name type="ordered locus">BUsg_313</name>
</gene>
<keyword id="KW-1003">Cell membrane</keyword>
<keyword id="KW-0378">Hydrolase</keyword>
<keyword id="KW-0472">Membrane</keyword>
<keyword id="KW-0479">Metal-binding</keyword>
<keyword id="KW-0482">Metalloprotease</keyword>
<keyword id="KW-0645">Protease</keyword>
<keyword id="KW-0812">Transmembrane</keyword>
<keyword id="KW-1133">Transmembrane helix</keyword>
<keyword id="KW-0862">Zinc</keyword>
<dbReference type="EC" id="3.4.24.-" evidence="1"/>
<dbReference type="EMBL" id="AE013218">
    <property type="protein sequence ID" value="AAM67867.1"/>
    <property type="molecule type" value="Genomic_DNA"/>
</dbReference>
<dbReference type="RefSeq" id="WP_011053834.1">
    <property type="nucleotide sequence ID" value="NC_004061.1"/>
</dbReference>
<dbReference type="SMR" id="Q8K9M1"/>
<dbReference type="STRING" id="198804.BUsg_313"/>
<dbReference type="MEROPS" id="M48.002"/>
<dbReference type="GeneID" id="93003782"/>
<dbReference type="KEGG" id="bas:BUsg_313"/>
<dbReference type="eggNOG" id="COG0501">
    <property type="taxonomic scope" value="Bacteria"/>
</dbReference>
<dbReference type="HOGENOM" id="CLU_042266_1_0_6"/>
<dbReference type="Proteomes" id="UP000000416">
    <property type="component" value="Chromosome"/>
</dbReference>
<dbReference type="GO" id="GO:0005886">
    <property type="term" value="C:plasma membrane"/>
    <property type="evidence" value="ECO:0007669"/>
    <property type="project" value="UniProtKB-SubCell"/>
</dbReference>
<dbReference type="GO" id="GO:0004222">
    <property type="term" value="F:metalloendopeptidase activity"/>
    <property type="evidence" value="ECO:0007669"/>
    <property type="project" value="UniProtKB-UniRule"/>
</dbReference>
<dbReference type="GO" id="GO:0008270">
    <property type="term" value="F:zinc ion binding"/>
    <property type="evidence" value="ECO:0007669"/>
    <property type="project" value="UniProtKB-UniRule"/>
</dbReference>
<dbReference type="GO" id="GO:0006508">
    <property type="term" value="P:proteolysis"/>
    <property type="evidence" value="ECO:0007669"/>
    <property type="project" value="UniProtKB-KW"/>
</dbReference>
<dbReference type="CDD" id="cd07335">
    <property type="entry name" value="M48B_HtpX_like"/>
    <property type="match status" value="1"/>
</dbReference>
<dbReference type="Gene3D" id="3.30.2010.10">
    <property type="entry name" value="Metalloproteases ('zincins'), catalytic domain"/>
    <property type="match status" value="1"/>
</dbReference>
<dbReference type="HAMAP" id="MF_00188">
    <property type="entry name" value="Pept_M48_protease_HtpX"/>
    <property type="match status" value="1"/>
</dbReference>
<dbReference type="InterPro" id="IPR050083">
    <property type="entry name" value="HtpX_protease"/>
</dbReference>
<dbReference type="InterPro" id="IPR022919">
    <property type="entry name" value="Pept_M48_protease_HtpX"/>
</dbReference>
<dbReference type="InterPro" id="IPR001915">
    <property type="entry name" value="Peptidase_M48"/>
</dbReference>
<dbReference type="NCBIfam" id="NF003965">
    <property type="entry name" value="PRK05457.1"/>
    <property type="match status" value="1"/>
</dbReference>
<dbReference type="PANTHER" id="PTHR43221">
    <property type="entry name" value="PROTEASE HTPX"/>
    <property type="match status" value="1"/>
</dbReference>
<dbReference type="PANTHER" id="PTHR43221:SF1">
    <property type="entry name" value="PROTEASE HTPX"/>
    <property type="match status" value="1"/>
</dbReference>
<dbReference type="Pfam" id="PF01435">
    <property type="entry name" value="Peptidase_M48"/>
    <property type="match status" value="1"/>
</dbReference>
<dbReference type="PROSITE" id="PS00142">
    <property type="entry name" value="ZINC_PROTEASE"/>
    <property type="match status" value="1"/>
</dbReference>
<proteinExistence type="inferred from homology"/>
<feature type="chain" id="PRO_0000138857" description="Protease HtpX">
    <location>
        <begin position="1"/>
        <end position="292"/>
    </location>
</feature>
<feature type="transmembrane region" description="Helical" evidence="1">
    <location>
        <begin position="4"/>
        <end position="24"/>
    </location>
</feature>
<feature type="transmembrane region" description="Helical" evidence="1">
    <location>
        <begin position="32"/>
        <end position="52"/>
    </location>
</feature>
<feature type="transmembrane region" description="Helical" evidence="1">
    <location>
        <begin position="150"/>
        <end position="170"/>
    </location>
</feature>
<feature type="transmembrane region" description="Helical" evidence="1">
    <location>
        <begin position="193"/>
        <end position="213"/>
    </location>
</feature>
<feature type="active site" evidence="1">
    <location>
        <position position="140"/>
    </location>
</feature>
<feature type="binding site" evidence="1">
    <location>
        <position position="139"/>
    </location>
    <ligand>
        <name>Zn(2+)</name>
        <dbReference type="ChEBI" id="CHEBI:29105"/>
        <note>catalytic</note>
    </ligand>
</feature>
<feature type="binding site" evidence="1">
    <location>
        <position position="143"/>
    </location>
    <ligand>
        <name>Zn(2+)</name>
        <dbReference type="ChEBI" id="CHEBI:29105"/>
        <note>catalytic</note>
    </ligand>
</feature>
<feature type="binding site" evidence="1">
    <location>
        <position position="222"/>
    </location>
    <ligand>
        <name>Zn(2+)</name>
        <dbReference type="ChEBI" id="CHEBI:29105"/>
        <note>catalytic</note>
    </ligand>
</feature>
<accession>Q8K9M1</accession>
<evidence type="ECO:0000255" key="1">
    <source>
        <dbReference type="HAMAP-Rule" id="MF_00188"/>
    </source>
</evidence>
<comment type="cofactor">
    <cofactor evidence="1">
        <name>Zn(2+)</name>
        <dbReference type="ChEBI" id="CHEBI:29105"/>
    </cofactor>
    <text evidence="1">Binds 1 zinc ion per subunit.</text>
</comment>
<comment type="subcellular location">
    <subcellularLocation>
        <location evidence="1">Cell membrane</location>
        <topology evidence="1">Multi-pass membrane protein</topology>
    </subcellularLocation>
</comment>
<comment type="similarity">
    <text evidence="1">Belongs to the peptidase M48B family.</text>
</comment>
<sequence>MIRIILFLLTNLAVMLTFSLILAVTGIQSESIYGLLIMSSLFGFSGSILSLIMSKWIALRSVNGRIINHPSNETESWLIDTIRQQSIKKNIIMPQIAIYEAADINAFATGARRNAALIAISTGLLENMTRSEAEAVIAHEISHVSNGDMITMTLVQGVVNTFVIFISRIISQALSSLLSSNRNENSEDEKDSFLFFLISTFLEIIFGVLASIITMWFSRHREFYADASSAKLVGKEKMISALNRLKSSHEPQESDSIIAFCINGKSNSFIELFASHPSLEKRIQALKNKKYM</sequence>